<organism>
    <name type="scientific">Schizosaccharomyces pombe (strain 972 / ATCC 24843)</name>
    <name type="common">Fission yeast</name>
    <dbReference type="NCBI Taxonomy" id="284812"/>
    <lineage>
        <taxon>Eukaryota</taxon>
        <taxon>Fungi</taxon>
        <taxon>Dikarya</taxon>
        <taxon>Ascomycota</taxon>
        <taxon>Taphrinomycotina</taxon>
        <taxon>Schizosaccharomycetes</taxon>
        <taxon>Schizosaccharomycetales</taxon>
        <taxon>Schizosaccharomycetaceae</taxon>
        <taxon>Schizosaccharomyces</taxon>
    </lineage>
</organism>
<keyword id="KW-0325">Glycoprotein</keyword>
<keyword id="KW-0326">Glycosidase</keyword>
<keyword id="KW-0378">Hydrolase</keyword>
<keyword id="KW-1185">Reference proteome</keyword>
<keyword id="KW-0732">Signal</keyword>
<dbReference type="EC" id="3.2.1.26"/>
<dbReference type="EMBL" id="AB011433">
    <property type="protein sequence ID" value="BAA25684.1"/>
    <property type="molecule type" value="Genomic_DNA"/>
</dbReference>
<dbReference type="EMBL" id="CU329672">
    <property type="protein sequence ID" value="CAB41057.1"/>
    <property type="molecule type" value="Genomic_DNA"/>
</dbReference>
<dbReference type="EMBL" id="D89242">
    <property type="protein sequence ID" value="BAA13903.1"/>
    <property type="molecule type" value="mRNA"/>
</dbReference>
<dbReference type="PIR" id="JE0102">
    <property type="entry name" value="JE0102"/>
</dbReference>
<dbReference type="RefSeq" id="NP_588300.1">
    <property type="nucleotide sequence ID" value="NM_001023290.2"/>
</dbReference>
<dbReference type="SMR" id="O59852"/>
<dbReference type="BioGRID" id="275797">
    <property type="interactions" value="7"/>
</dbReference>
<dbReference type="FunCoup" id="O59852">
    <property type="interactions" value="131"/>
</dbReference>
<dbReference type="STRING" id="284812.O59852"/>
<dbReference type="CAZy" id="GH32">
    <property type="family name" value="Glycoside Hydrolase Family 32"/>
</dbReference>
<dbReference type="GlyCosmos" id="O59852">
    <property type="glycosylation" value="16 sites, No reported glycans"/>
</dbReference>
<dbReference type="iPTMnet" id="O59852"/>
<dbReference type="PaxDb" id="4896-SPCC191.11.1"/>
<dbReference type="EnsemblFungi" id="SPCC191.11.1">
    <property type="protein sequence ID" value="SPCC191.11.1:pep"/>
    <property type="gene ID" value="SPCC191.11"/>
</dbReference>
<dbReference type="GeneID" id="2539227"/>
<dbReference type="KEGG" id="spo:2539227"/>
<dbReference type="PomBase" id="SPCC191.11">
    <property type="gene designation" value="inv1"/>
</dbReference>
<dbReference type="VEuPathDB" id="FungiDB:SPCC191.11"/>
<dbReference type="eggNOG" id="KOG0228">
    <property type="taxonomic scope" value="Eukaryota"/>
</dbReference>
<dbReference type="HOGENOM" id="CLU_001528_3_3_1"/>
<dbReference type="InParanoid" id="O59852"/>
<dbReference type="OMA" id="FRIFKAT"/>
<dbReference type="PhylomeDB" id="O59852"/>
<dbReference type="PRO" id="PR:O59852"/>
<dbReference type="Proteomes" id="UP000002485">
    <property type="component" value="Chromosome III"/>
</dbReference>
<dbReference type="GO" id="GO:0005737">
    <property type="term" value="C:cytoplasm"/>
    <property type="evidence" value="ECO:0000318"/>
    <property type="project" value="GO_Central"/>
</dbReference>
<dbReference type="GO" id="GO:0005576">
    <property type="term" value="C:extracellular region"/>
    <property type="evidence" value="ECO:0000250"/>
    <property type="project" value="PomBase"/>
</dbReference>
<dbReference type="GO" id="GO:0004564">
    <property type="term" value="F:beta-fructofuranosidase activity"/>
    <property type="evidence" value="ECO:0000315"/>
    <property type="project" value="PomBase"/>
</dbReference>
<dbReference type="GO" id="GO:0004575">
    <property type="term" value="F:sucrose alpha-glucosidase activity"/>
    <property type="evidence" value="ECO:0000314"/>
    <property type="project" value="PomBase"/>
</dbReference>
<dbReference type="GO" id="GO:0005987">
    <property type="term" value="P:sucrose catabolic process"/>
    <property type="evidence" value="ECO:0000315"/>
    <property type="project" value="PomBase"/>
</dbReference>
<dbReference type="CDD" id="cd18622">
    <property type="entry name" value="GH32_Inu-like"/>
    <property type="match status" value="1"/>
</dbReference>
<dbReference type="FunFam" id="2.115.10.20:FF:000002">
    <property type="entry name" value="Invertase 2"/>
    <property type="match status" value="1"/>
</dbReference>
<dbReference type="Gene3D" id="2.60.120.560">
    <property type="entry name" value="Exo-inulinase, domain 1"/>
    <property type="match status" value="1"/>
</dbReference>
<dbReference type="Gene3D" id="2.115.10.20">
    <property type="entry name" value="Glycosyl hydrolase domain, family 43"/>
    <property type="match status" value="1"/>
</dbReference>
<dbReference type="InterPro" id="IPR013320">
    <property type="entry name" value="ConA-like_dom_sf"/>
</dbReference>
<dbReference type="InterPro" id="IPR001362">
    <property type="entry name" value="Glyco_hydro_32"/>
</dbReference>
<dbReference type="InterPro" id="IPR018053">
    <property type="entry name" value="Glyco_hydro_32_AS"/>
</dbReference>
<dbReference type="InterPro" id="IPR013189">
    <property type="entry name" value="Glyco_hydro_32_C"/>
</dbReference>
<dbReference type="InterPro" id="IPR013148">
    <property type="entry name" value="Glyco_hydro_32_N"/>
</dbReference>
<dbReference type="InterPro" id="IPR023296">
    <property type="entry name" value="Glyco_hydro_beta-prop_sf"/>
</dbReference>
<dbReference type="PANTHER" id="PTHR42800">
    <property type="entry name" value="EXOINULINASE INUD (AFU_ORTHOLOGUE AFUA_5G00480)"/>
    <property type="match status" value="1"/>
</dbReference>
<dbReference type="PANTHER" id="PTHR42800:SF4">
    <property type="entry name" value="INVERTASE 2"/>
    <property type="match status" value="1"/>
</dbReference>
<dbReference type="Pfam" id="PF08244">
    <property type="entry name" value="Glyco_hydro_32C"/>
    <property type="match status" value="1"/>
</dbReference>
<dbReference type="Pfam" id="PF00251">
    <property type="entry name" value="Glyco_hydro_32N"/>
    <property type="match status" value="1"/>
</dbReference>
<dbReference type="SMART" id="SM00640">
    <property type="entry name" value="Glyco_32"/>
    <property type="match status" value="1"/>
</dbReference>
<dbReference type="SUPFAM" id="SSF75005">
    <property type="entry name" value="Arabinanase/levansucrase/invertase"/>
    <property type="match status" value="1"/>
</dbReference>
<dbReference type="SUPFAM" id="SSF49899">
    <property type="entry name" value="Concanavalin A-like lectins/glucanases"/>
    <property type="match status" value="1"/>
</dbReference>
<dbReference type="PROSITE" id="PS00609">
    <property type="entry name" value="GLYCOSYL_HYDROL_F32"/>
    <property type="match status" value="1"/>
</dbReference>
<gene>
    <name type="primary">inv1</name>
    <name type="ORF">SPCC191.11</name>
</gene>
<reference key="1">
    <citation type="journal article" date="1998" name="Biochem. Biophys. Res. Commun.">
        <title>Isolation and characterization of an invertase and its repressor genes from Schizosaccharomyces pombe.</title>
        <authorList>
            <person name="Tanaka N."/>
            <person name="Ohuchi N."/>
            <person name="Mukai Y."/>
            <person name="Osaka Y."/>
            <person name="Ohtani Y."/>
            <person name="Tabuchi M."/>
            <person name="Bhuiyan M.S.A."/>
            <person name="Fukui H."/>
            <person name="Harashima S."/>
            <person name="Takegawa K."/>
        </authorList>
    </citation>
    <scope>NUCLEOTIDE SEQUENCE [GENOMIC DNA]</scope>
</reference>
<reference key="2">
    <citation type="journal article" date="2002" name="Nature">
        <title>The genome sequence of Schizosaccharomyces pombe.</title>
        <authorList>
            <person name="Wood V."/>
            <person name="Gwilliam R."/>
            <person name="Rajandream M.A."/>
            <person name="Lyne M.H."/>
            <person name="Lyne R."/>
            <person name="Stewart A."/>
            <person name="Sgouros J.G."/>
            <person name="Peat N."/>
            <person name="Hayles J."/>
            <person name="Baker S.G."/>
            <person name="Basham D."/>
            <person name="Bowman S."/>
            <person name="Brooks K."/>
            <person name="Brown D."/>
            <person name="Brown S."/>
            <person name="Chillingworth T."/>
            <person name="Churcher C.M."/>
            <person name="Collins M."/>
            <person name="Connor R."/>
            <person name="Cronin A."/>
            <person name="Davis P."/>
            <person name="Feltwell T."/>
            <person name="Fraser A."/>
            <person name="Gentles S."/>
            <person name="Goble A."/>
            <person name="Hamlin N."/>
            <person name="Harris D.E."/>
            <person name="Hidalgo J."/>
            <person name="Hodgson G."/>
            <person name="Holroyd S."/>
            <person name="Hornsby T."/>
            <person name="Howarth S."/>
            <person name="Huckle E.J."/>
            <person name="Hunt S."/>
            <person name="Jagels K."/>
            <person name="James K.D."/>
            <person name="Jones L."/>
            <person name="Jones M."/>
            <person name="Leather S."/>
            <person name="McDonald S."/>
            <person name="McLean J."/>
            <person name="Mooney P."/>
            <person name="Moule S."/>
            <person name="Mungall K.L."/>
            <person name="Murphy L.D."/>
            <person name="Niblett D."/>
            <person name="Odell C."/>
            <person name="Oliver K."/>
            <person name="O'Neil S."/>
            <person name="Pearson D."/>
            <person name="Quail M.A."/>
            <person name="Rabbinowitsch E."/>
            <person name="Rutherford K.M."/>
            <person name="Rutter S."/>
            <person name="Saunders D."/>
            <person name="Seeger K."/>
            <person name="Sharp S."/>
            <person name="Skelton J."/>
            <person name="Simmonds M.N."/>
            <person name="Squares R."/>
            <person name="Squares S."/>
            <person name="Stevens K."/>
            <person name="Taylor K."/>
            <person name="Taylor R.G."/>
            <person name="Tivey A."/>
            <person name="Walsh S.V."/>
            <person name="Warren T."/>
            <person name="Whitehead S."/>
            <person name="Woodward J.R."/>
            <person name="Volckaert G."/>
            <person name="Aert R."/>
            <person name="Robben J."/>
            <person name="Grymonprez B."/>
            <person name="Weltjens I."/>
            <person name="Vanstreels E."/>
            <person name="Rieger M."/>
            <person name="Schaefer M."/>
            <person name="Mueller-Auer S."/>
            <person name="Gabel C."/>
            <person name="Fuchs M."/>
            <person name="Duesterhoeft A."/>
            <person name="Fritzc C."/>
            <person name="Holzer E."/>
            <person name="Moestl D."/>
            <person name="Hilbert H."/>
            <person name="Borzym K."/>
            <person name="Langer I."/>
            <person name="Beck A."/>
            <person name="Lehrach H."/>
            <person name="Reinhardt R."/>
            <person name="Pohl T.M."/>
            <person name="Eger P."/>
            <person name="Zimmermann W."/>
            <person name="Wedler H."/>
            <person name="Wambutt R."/>
            <person name="Purnelle B."/>
            <person name="Goffeau A."/>
            <person name="Cadieu E."/>
            <person name="Dreano S."/>
            <person name="Gloux S."/>
            <person name="Lelaure V."/>
            <person name="Mottier S."/>
            <person name="Galibert F."/>
            <person name="Aves S.J."/>
            <person name="Xiang Z."/>
            <person name="Hunt C."/>
            <person name="Moore K."/>
            <person name="Hurst S.M."/>
            <person name="Lucas M."/>
            <person name="Rochet M."/>
            <person name="Gaillardin C."/>
            <person name="Tallada V.A."/>
            <person name="Garzon A."/>
            <person name="Thode G."/>
            <person name="Daga R.R."/>
            <person name="Cruzado L."/>
            <person name="Jimenez J."/>
            <person name="Sanchez M."/>
            <person name="del Rey F."/>
            <person name="Benito J."/>
            <person name="Dominguez A."/>
            <person name="Revuelta J.L."/>
            <person name="Moreno S."/>
            <person name="Armstrong J."/>
            <person name="Forsburg S.L."/>
            <person name="Cerutti L."/>
            <person name="Lowe T."/>
            <person name="McCombie W.R."/>
            <person name="Paulsen I."/>
            <person name="Potashkin J."/>
            <person name="Shpakovski G.V."/>
            <person name="Ussery D."/>
            <person name="Barrell B.G."/>
            <person name="Nurse P."/>
        </authorList>
    </citation>
    <scope>NUCLEOTIDE SEQUENCE [LARGE SCALE GENOMIC DNA]</scope>
    <source>
        <strain>972 / ATCC 24843</strain>
    </source>
</reference>
<reference key="3">
    <citation type="journal article" date="1997" name="DNA Res.">
        <title>Identification of open reading frames in Schizosaccharomyces pombe cDNAs.</title>
        <authorList>
            <person name="Yoshioka S."/>
            <person name="Kato K."/>
            <person name="Nakai K."/>
            <person name="Okayama H."/>
            <person name="Nojima H."/>
        </authorList>
    </citation>
    <scope>NUCLEOTIDE SEQUENCE [LARGE SCALE MRNA] OF 88-581</scope>
    <source>
        <strain>PR745</strain>
    </source>
</reference>
<reference key="4">
    <citation type="journal article" date="1990" name="Biochem. J.">
        <title>Purification and characterization of the invertase from Schizosaccharomyces pombe.</title>
        <authorList>
            <person name="Moreno S."/>
            <person name="Sanchez Y."/>
            <person name="Rodriguez L."/>
        </authorList>
    </citation>
    <scope>GLYCOSYLATION AT ASN-37; ASN-40; ASN-46; ASN-57; ASN-62; ASN-79; ASN-168; ASN-175; ASN-322; ASN-399; ASN-409; ASN-425; ASN-446; ASN-452; ASN-519 AND ASN-569</scope>
</reference>
<feature type="signal peptide" evidence="2">
    <location>
        <begin position="1"/>
        <end position="22"/>
    </location>
</feature>
<feature type="chain" id="PRO_0000033397" description="Invertase">
    <location>
        <begin position="23"/>
        <end position="581"/>
    </location>
</feature>
<feature type="active site" evidence="3">
    <location>
        <position position="97"/>
    </location>
</feature>
<feature type="binding site" evidence="1">
    <location>
        <begin position="94"/>
        <end position="97"/>
    </location>
    <ligand>
        <name>substrate</name>
    </ligand>
</feature>
<feature type="binding site" evidence="1">
    <location>
        <position position="113"/>
    </location>
    <ligand>
        <name>substrate</name>
    </ligand>
</feature>
<feature type="binding site" evidence="1">
    <location>
        <begin position="158"/>
        <end position="159"/>
    </location>
    <ligand>
        <name>substrate</name>
    </ligand>
</feature>
<feature type="binding site" evidence="1">
    <location>
        <begin position="227"/>
        <end position="228"/>
    </location>
    <ligand>
        <name>substrate</name>
    </ligand>
</feature>
<feature type="binding site" evidence="1">
    <location>
        <position position="280"/>
    </location>
    <ligand>
        <name>substrate</name>
    </ligand>
</feature>
<feature type="binding site" evidence="1">
    <location>
        <position position="366"/>
    </location>
    <ligand>
        <name>substrate</name>
    </ligand>
</feature>
<feature type="glycosylation site" description="N-linked (GlcNAc...) asparagine" evidence="6">
    <location>
        <position position="37"/>
    </location>
</feature>
<feature type="glycosylation site" description="N-linked (GlcNAc...) asparagine" evidence="6">
    <location>
        <position position="40"/>
    </location>
</feature>
<feature type="glycosylation site" description="N-linked (GlcNAc...) asparagine" evidence="6">
    <location>
        <position position="46"/>
    </location>
</feature>
<feature type="glycosylation site" description="N-linked (GlcNAc...) asparagine" evidence="6">
    <location>
        <position position="57"/>
    </location>
</feature>
<feature type="glycosylation site" description="N-linked (GlcNAc...) asparagine" evidence="6">
    <location>
        <position position="62"/>
    </location>
</feature>
<feature type="glycosylation site" description="N-linked (GlcNAc...) asparagine" evidence="6">
    <location>
        <position position="79"/>
    </location>
</feature>
<feature type="glycosylation site" description="N-linked (GlcNAc...) asparagine" evidence="6">
    <location>
        <position position="168"/>
    </location>
</feature>
<feature type="glycosylation site" description="N-linked (GlcNAc...) asparagine" evidence="6">
    <location>
        <position position="175"/>
    </location>
</feature>
<feature type="glycosylation site" description="N-linked (GlcNAc...) asparagine" evidence="6">
    <location>
        <position position="322"/>
    </location>
</feature>
<feature type="glycosylation site" description="N-linked (GlcNAc...) asparagine" evidence="6">
    <location>
        <position position="399"/>
    </location>
</feature>
<feature type="glycosylation site" description="N-linked (GlcNAc...) asparagine" evidence="6">
    <location>
        <position position="409"/>
    </location>
</feature>
<feature type="glycosylation site" description="N-linked (GlcNAc...) asparagine" evidence="6">
    <location>
        <position position="425"/>
    </location>
</feature>
<feature type="glycosylation site" description="N-linked (GlcNAc...) asparagine" evidence="6">
    <location>
        <position position="446"/>
    </location>
</feature>
<feature type="glycosylation site" description="N-linked (GlcNAc...) asparagine" evidence="6">
    <location>
        <position position="452"/>
    </location>
</feature>
<feature type="glycosylation site" description="N-linked (GlcNAc...) asparagine" evidence="6">
    <location>
        <position position="519"/>
    </location>
</feature>
<feature type="glycosylation site" description="N-linked (GlcNAc...) asparagine" evidence="6">
    <location>
        <position position="569"/>
    </location>
</feature>
<feature type="sequence conflict" description="In Ref. 3." evidence="5" ref="3">
    <location>
        <begin position="186"/>
        <end position="189"/>
    </location>
</feature>
<feature type="sequence conflict" description="In Ref. 3." evidence="5" ref="3">
    <original>H</original>
    <variation>Y</variation>
    <location>
        <position position="190"/>
    </location>
</feature>
<feature type="sequence conflict" description="In Ref. 3; BAA13903." evidence="5" ref="3">
    <original>A</original>
    <variation>P</variation>
    <location>
        <position position="195"/>
    </location>
</feature>
<feature type="sequence conflict" description="In Ref. 3; BAA13903." evidence="5" ref="3">
    <original>Q</original>
    <variation>L</variation>
    <location>
        <position position="198"/>
    </location>
</feature>
<feature type="sequence conflict" description="In Ref. 3; BAA13903." evidence="5" ref="3">
    <original>D</original>
    <variation>N</variation>
    <location>
        <position position="205"/>
    </location>
</feature>
<feature type="sequence conflict" description="In Ref. 3; BAA13903." evidence="5" ref="3">
    <original>I</original>
    <variation>M</variation>
    <location>
        <position position="243"/>
    </location>
</feature>
<feature type="sequence conflict" description="In Ref. 3; BAA13903." evidence="5" ref="3">
    <original>M</original>
    <variation>L</variation>
    <location>
        <position position="246"/>
    </location>
</feature>
<feature type="sequence conflict" description="In Ref. 3; BAA13903." evidence="5" ref="3">
    <original>S</original>
    <variation>P</variation>
    <location>
        <position position="256"/>
    </location>
</feature>
<comment type="catalytic activity">
    <reaction evidence="3">
        <text>Hydrolysis of terminal non-reducing beta-D-fructofuranoside residues in beta-D-fructofuranosides.</text>
        <dbReference type="EC" id="3.2.1.26"/>
    </reaction>
</comment>
<comment type="PTM">
    <text evidence="4">Glycosylated; contains 67% carbohydrates. This is composed of equimolar amounts of mannose and galactose. There is also a small amount of glucosamine present.</text>
</comment>
<comment type="similarity">
    <text evidence="5">Belongs to the glycosyl hydrolase 32 family.</text>
</comment>
<name>INV1_SCHPO</name>
<proteinExistence type="evidence at protein level"/>
<evidence type="ECO:0000250" key="1"/>
<evidence type="ECO:0000255" key="2"/>
<evidence type="ECO:0000255" key="3">
    <source>
        <dbReference type="PROSITE-ProRule" id="PRU10067"/>
    </source>
</evidence>
<evidence type="ECO:0000269" key="4">
    <source>
    </source>
</evidence>
<evidence type="ECO:0000305" key="5"/>
<evidence type="ECO:0000305" key="6">
    <source>
    </source>
</evidence>
<sequence>MFLKYILASGICLVSLLSSTNAAPRHLYVKRYPVIYNASNITEVSNSTTVPPPPFVNTTAPNGTCLGNYNEYLPSGYYNATDRPKIHFTPSSGFMNDPNGLVYTGGVYHMFFQYSPKTLTAGEVHWGHTVSKDLIHWENYPIAIYPDEHENGVLSLPFSGSAVVDVHNSSGLFSNDTIPEERIVLIYTDHWTGVAERQAIAYTTDGGYTFKKYSGNPVLDINSLQFRDPKVIWDFDANRWVMIVAMSQNYGIAFYSSYDLIHWTELSVFSTSGYLGLQYECPGMARVPVEGTDEYKWVLFISINPGAPLGGSVVQYFVGDWNGTNFVPDDGQTRFVDLGKDFYASALYHSSSANADVIGVGWASNWQYTNQAPTQVFRSAMTVARKFTLRDVPQNPMTNLTSLIQTPLNVSLLRDETLFTAPVINSSSSLSGSPITLPSNTAFEFNVTLSINYTEGCTTGYCLGRIIIDSDDPYRLQSISVDVDFAASTLVINRAKAQMGWFNSLFTPSFANDIYIYGNVTLYGIVDNGLLELYVNNGEKTYTNDFFFLQGATPGQISFAAFQGVSFNNVTVTPLKTIWNC</sequence>
<accession>O59852</accession>
<accession>P78891</accession>
<protein>
    <recommendedName>
        <fullName>Invertase</fullName>
        <ecNumber>3.2.1.26</ecNumber>
    </recommendedName>
    <alternativeName>
        <fullName>Beta-fructofuranosidase</fullName>
    </alternativeName>
    <alternativeName>
        <fullName>Saccharase</fullName>
    </alternativeName>
</protein>